<keyword id="KW-0687">Ribonucleoprotein</keyword>
<keyword id="KW-0689">Ribosomal protein</keyword>
<keyword id="KW-0694">RNA-binding</keyword>
<keyword id="KW-0699">rRNA-binding</keyword>
<proteinExistence type="inferred from homology"/>
<comment type="function">
    <text evidence="1">Binds 16S rRNA, required for the assembly of 30S particles and may also be responsible for determining the conformation of the 16S rRNA at the A site.</text>
</comment>
<comment type="subunit">
    <text evidence="1">Part of the 30S ribosomal subunit. Contacts proteins S3 and S10.</text>
</comment>
<comment type="similarity">
    <text evidence="1">Belongs to the universal ribosomal protein uS14 family.</text>
</comment>
<gene>
    <name evidence="1" type="primary">rpsN</name>
    <name type="ordered locus">BB0044</name>
</gene>
<accession>Q7WRB0</accession>
<feature type="chain" id="PRO_1000128313" description="Small ribosomal subunit protein uS14">
    <location>
        <begin position="1"/>
        <end position="101"/>
    </location>
</feature>
<sequence length="101" mass="11723">MAKLSLINRDIKRAKLADKYAAKRAELKAIIDDQSKTDEERYQARLKLQQLPRNANPTRQRNRCVVTGRPRGVFRKFGLTRHKLREMAMKGEVPGMTKASW</sequence>
<name>RS14_BORBR</name>
<evidence type="ECO:0000255" key="1">
    <source>
        <dbReference type="HAMAP-Rule" id="MF_00537"/>
    </source>
</evidence>
<evidence type="ECO:0000305" key="2"/>
<organism>
    <name type="scientific">Bordetella bronchiseptica (strain ATCC BAA-588 / NCTC 13252 / RB50)</name>
    <name type="common">Alcaligenes bronchisepticus</name>
    <dbReference type="NCBI Taxonomy" id="257310"/>
    <lineage>
        <taxon>Bacteria</taxon>
        <taxon>Pseudomonadati</taxon>
        <taxon>Pseudomonadota</taxon>
        <taxon>Betaproteobacteria</taxon>
        <taxon>Burkholderiales</taxon>
        <taxon>Alcaligenaceae</taxon>
        <taxon>Bordetella</taxon>
    </lineage>
</organism>
<reference key="1">
    <citation type="journal article" date="2003" name="Nat. Genet.">
        <title>Comparative analysis of the genome sequences of Bordetella pertussis, Bordetella parapertussis and Bordetella bronchiseptica.</title>
        <authorList>
            <person name="Parkhill J."/>
            <person name="Sebaihia M."/>
            <person name="Preston A."/>
            <person name="Murphy L.D."/>
            <person name="Thomson N.R."/>
            <person name="Harris D.E."/>
            <person name="Holden M.T.G."/>
            <person name="Churcher C.M."/>
            <person name="Bentley S.D."/>
            <person name="Mungall K.L."/>
            <person name="Cerdeno-Tarraga A.-M."/>
            <person name="Temple L."/>
            <person name="James K.D."/>
            <person name="Harris B."/>
            <person name="Quail M.A."/>
            <person name="Achtman M."/>
            <person name="Atkin R."/>
            <person name="Baker S."/>
            <person name="Basham D."/>
            <person name="Bason N."/>
            <person name="Cherevach I."/>
            <person name="Chillingworth T."/>
            <person name="Collins M."/>
            <person name="Cronin A."/>
            <person name="Davis P."/>
            <person name="Doggett J."/>
            <person name="Feltwell T."/>
            <person name="Goble A."/>
            <person name="Hamlin N."/>
            <person name="Hauser H."/>
            <person name="Holroyd S."/>
            <person name="Jagels K."/>
            <person name="Leather S."/>
            <person name="Moule S."/>
            <person name="Norberczak H."/>
            <person name="O'Neil S."/>
            <person name="Ormond D."/>
            <person name="Price C."/>
            <person name="Rabbinowitsch E."/>
            <person name="Rutter S."/>
            <person name="Sanders M."/>
            <person name="Saunders D."/>
            <person name="Seeger K."/>
            <person name="Sharp S."/>
            <person name="Simmonds M."/>
            <person name="Skelton J."/>
            <person name="Squares R."/>
            <person name="Squares S."/>
            <person name="Stevens K."/>
            <person name="Unwin L."/>
            <person name="Whitehead S."/>
            <person name="Barrell B.G."/>
            <person name="Maskell D.J."/>
        </authorList>
    </citation>
    <scope>NUCLEOTIDE SEQUENCE [LARGE SCALE GENOMIC DNA]</scope>
    <source>
        <strain>ATCC BAA-588 / NCTC 13252 / RB50</strain>
    </source>
</reference>
<protein>
    <recommendedName>
        <fullName evidence="1">Small ribosomal subunit protein uS14</fullName>
    </recommendedName>
    <alternativeName>
        <fullName evidence="2">30S ribosomal protein S14</fullName>
    </alternativeName>
</protein>
<dbReference type="EMBL" id="BX640437">
    <property type="protein sequence ID" value="CAE30546.1"/>
    <property type="molecule type" value="Genomic_DNA"/>
</dbReference>
<dbReference type="RefSeq" id="WP_003806919.1">
    <property type="nucleotide sequence ID" value="NC_002927.3"/>
</dbReference>
<dbReference type="SMR" id="Q7WRB0"/>
<dbReference type="GeneID" id="93206274"/>
<dbReference type="KEGG" id="bbr:BB0044"/>
<dbReference type="eggNOG" id="COG0199">
    <property type="taxonomic scope" value="Bacteria"/>
</dbReference>
<dbReference type="HOGENOM" id="CLU_139869_0_1_4"/>
<dbReference type="Proteomes" id="UP000001027">
    <property type="component" value="Chromosome"/>
</dbReference>
<dbReference type="GO" id="GO:0005737">
    <property type="term" value="C:cytoplasm"/>
    <property type="evidence" value="ECO:0007669"/>
    <property type="project" value="UniProtKB-ARBA"/>
</dbReference>
<dbReference type="GO" id="GO:0015935">
    <property type="term" value="C:small ribosomal subunit"/>
    <property type="evidence" value="ECO:0007669"/>
    <property type="project" value="TreeGrafter"/>
</dbReference>
<dbReference type="GO" id="GO:0019843">
    <property type="term" value="F:rRNA binding"/>
    <property type="evidence" value="ECO:0007669"/>
    <property type="project" value="UniProtKB-UniRule"/>
</dbReference>
<dbReference type="GO" id="GO:0003735">
    <property type="term" value="F:structural constituent of ribosome"/>
    <property type="evidence" value="ECO:0007669"/>
    <property type="project" value="InterPro"/>
</dbReference>
<dbReference type="GO" id="GO:0006412">
    <property type="term" value="P:translation"/>
    <property type="evidence" value="ECO:0007669"/>
    <property type="project" value="UniProtKB-UniRule"/>
</dbReference>
<dbReference type="FunFam" id="1.10.287.1480:FF:000001">
    <property type="entry name" value="30S ribosomal protein S14"/>
    <property type="match status" value="1"/>
</dbReference>
<dbReference type="Gene3D" id="1.10.287.1480">
    <property type="match status" value="1"/>
</dbReference>
<dbReference type="HAMAP" id="MF_00537">
    <property type="entry name" value="Ribosomal_uS14_1"/>
    <property type="match status" value="1"/>
</dbReference>
<dbReference type="InterPro" id="IPR001209">
    <property type="entry name" value="Ribosomal_uS14"/>
</dbReference>
<dbReference type="InterPro" id="IPR023036">
    <property type="entry name" value="Ribosomal_uS14_bac/plastid"/>
</dbReference>
<dbReference type="NCBIfam" id="NF006477">
    <property type="entry name" value="PRK08881.1"/>
    <property type="match status" value="1"/>
</dbReference>
<dbReference type="PANTHER" id="PTHR19836">
    <property type="entry name" value="30S RIBOSOMAL PROTEIN S14"/>
    <property type="match status" value="1"/>
</dbReference>
<dbReference type="PANTHER" id="PTHR19836:SF19">
    <property type="entry name" value="SMALL RIBOSOMAL SUBUNIT PROTEIN US14M"/>
    <property type="match status" value="1"/>
</dbReference>
<dbReference type="Pfam" id="PF00253">
    <property type="entry name" value="Ribosomal_S14"/>
    <property type="match status" value="1"/>
</dbReference>
<dbReference type="SUPFAM" id="SSF57716">
    <property type="entry name" value="Glucocorticoid receptor-like (DNA-binding domain)"/>
    <property type="match status" value="1"/>
</dbReference>